<protein>
    <recommendedName>
        <fullName evidence="1">Cytidine deaminase</fullName>
        <ecNumber evidence="1">3.5.4.5</ecNumber>
    </recommendedName>
    <alternativeName>
        <fullName evidence="1">Cytidine aminohydrolase</fullName>
        <shortName evidence="1">CDA</shortName>
    </alternativeName>
</protein>
<accession>B1KRC5</accession>
<organism>
    <name type="scientific">Shewanella woodyi (strain ATCC 51908 / MS32)</name>
    <dbReference type="NCBI Taxonomy" id="392500"/>
    <lineage>
        <taxon>Bacteria</taxon>
        <taxon>Pseudomonadati</taxon>
        <taxon>Pseudomonadota</taxon>
        <taxon>Gammaproteobacteria</taxon>
        <taxon>Alteromonadales</taxon>
        <taxon>Shewanellaceae</taxon>
        <taxon>Shewanella</taxon>
    </lineage>
</organism>
<gene>
    <name evidence="1" type="primary">cdd</name>
    <name type="ordered locus">Swoo_2048</name>
</gene>
<reference key="1">
    <citation type="submission" date="2008-02" db="EMBL/GenBank/DDBJ databases">
        <title>Complete sequence of Shewanella woodyi ATCC 51908.</title>
        <authorList>
            <consortium name="US DOE Joint Genome Institute"/>
            <person name="Copeland A."/>
            <person name="Lucas S."/>
            <person name="Lapidus A."/>
            <person name="Glavina del Rio T."/>
            <person name="Dalin E."/>
            <person name="Tice H."/>
            <person name="Bruce D."/>
            <person name="Goodwin L."/>
            <person name="Pitluck S."/>
            <person name="Sims D."/>
            <person name="Brettin T."/>
            <person name="Detter J.C."/>
            <person name="Han C."/>
            <person name="Kuske C.R."/>
            <person name="Schmutz J."/>
            <person name="Larimer F."/>
            <person name="Land M."/>
            <person name="Hauser L."/>
            <person name="Kyrpides N."/>
            <person name="Lykidis A."/>
            <person name="Zhao J.-S."/>
            <person name="Richardson P."/>
        </authorList>
    </citation>
    <scope>NUCLEOTIDE SEQUENCE [LARGE SCALE GENOMIC DNA]</scope>
    <source>
        <strain>ATCC 51908 / MS32</strain>
    </source>
</reference>
<comment type="function">
    <text evidence="1">This enzyme scavenges exogenous and endogenous cytidine and 2'-deoxycytidine for UMP synthesis.</text>
</comment>
<comment type="catalytic activity">
    <reaction evidence="1">
        <text>cytidine + H2O + H(+) = uridine + NH4(+)</text>
        <dbReference type="Rhea" id="RHEA:16069"/>
        <dbReference type="ChEBI" id="CHEBI:15377"/>
        <dbReference type="ChEBI" id="CHEBI:15378"/>
        <dbReference type="ChEBI" id="CHEBI:16704"/>
        <dbReference type="ChEBI" id="CHEBI:17562"/>
        <dbReference type="ChEBI" id="CHEBI:28938"/>
        <dbReference type="EC" id="3.5.4.5"/>
    </reaction>
</comment>
<comment type="catalytic activity">
    <reaction evidence="1">
        <text>2'-deoxycytidine + H2O + H(+) = 2'-deoxyuridine + NH4(+)</text>
        <dbReference type="Rhea" id="RHEA:13433"/>
        <dbReference type="ChEBI" id="CHEBI:15377"/>
        <dbReference type="ChEBI" id="CHEBI:15378"/>
        <dbReference type="ChEBI" id="CHEBI:15698"/>
        <dbReference type="ChEBI" id="CHEBI:16450"/>
        <dbReference type="ChEBI" id="CHEBI:28938"/>
        <dbReference type="EC" id="3.5.4.5"/>
    </reaction>
</comment>
<comment type="cofactor">
    <cofactor evidence="1">
        <name>Zn(2+)</name>
        <dbReference type="ChEBI" id="CHEBI:29105"/>
    </cofactor>
    <text evidence="1">Binds 1 zinc ion.</text>
</comment>
<comment type="subunit">
    <text evidence="1">Homodimer.</text>
</comment>
<comment type="similarity">
    <text evidence="1">Belongs to the cytidine and deoxycytidylate deaminase family.</text>
</comment>
<dbReference type="EC" id="3.5.4.5" evidence="1"/>
<dbReference type="EMBL" id="CP000961">
    <property type="protein sequence ID" value="ACA86332.1"/>
    <property type="molecule type" value="Genomic_DNA"/>
</dbReference>
<dbReference type="RefSeq" id="WP_012324678.1">
    <property type="nucleotide sequence ID" value="NC_010506.1"/>
</dbReference>
<dbReference type="SMR" id="B1KRC5"/>
<dbReference type="STRING" id="392500.Swoo_2048"/>
<dbReference type="KEGG" id="swd:Swoo_2048"/>
<dbReference type="eggNOG" id="COG0295">
    <property type="taxonomic scope" value="Bacteria"/>
</dbReference>
<dbReference type="HOGENOM" id="CLU_052424_0_0_6"/>
<dbReference type="Proteomes" id="UP000002168">
    <property type="component" value="Chromosome"/>
</dbReference>
<dbReference type="GO" id="GO:0005829">
    <property type="term" value="C:cytosol"/>
    <property type="evidence" value="ECO:0007669"/>
    <property type="project" value="TreeGrafter"/>
</dbReference>
<dbReference type="GO" id="GO:0004126">
    <property type="term" value="F:cytidine deaminase activity"/>
    <property type="evidence" value="ECO:0007669"/>
    <property type="project" value="UniProtKB-UniRule"/>
</dbReference>
<dbReference type="GO" id="GO:0042802">
    <property type="term" value="F:identical protein binding"/>
    <property type="evidence" value="ECO:0007669"/>
    <property type="project" value="UniProtKB-ARBA"/>
</dbReference>
<dbReference type="GO" id="GO:0008270">
    <property type="term" value="F:zinc ion binding"/>
    <property type="evidence" value="ECO:0007669"/>
    <property type="project" value="UniProtKB-UniRule"/>
</dbReference>
<dbReference type="GO" id="GO:0009972">
    <property type="term" value="P:cytidine deamination"/>
    <property type="evidence" value="ECO:0007669"/>
    <property type="project" value="InterPro"/>
</dbReference>
<dbReference type="CDD" id="cd01283">
    <property type="entry name" value="cytidine_deaminase"/>
    <property type="match status" value="2"/>
</dbReference>
<dbReference type="FunFam" id="3.40.140.10:FF:000007">
    <property type="entry name" value="Cytidine deaminase"/>
    <property type="match status" value="1"/>
</dbReference>
<dbReference type="Gene3D" id="3.40.140.10">
    <property type="entry name" value="Cytidine Deaminase, domain 2"/>
    <property type="match status" value="2"/>
</dbReference>
<dbReference type="HAMAP" id="MF_01558">
    <property type="entry name" value="Cyt_deam"/>
    <property type="match status" value="1"/>
</dbReference>
<dbReference type="InterPro" id="IPR016192">
    <property type="entry name" value="APOBEC/CMP_deaminase_Zn-bd"/>
</dbReference>
<dbReference type="InterPro" id="IPR002125">
    <property type="entry name" value="CMP_dCMP_dom"/>
</dbReference>
<dbReference type="InterPro" id="IPR013171">
    <property type="entry name" value="Cyd/dCyd_deaminase_Zn-bd"/>
</dbReference>
<dbReference type="InterPro" id="IPR050202">
    <property type="entry name" value="Cyt/Deoxycyt_deaminase"/>
</dbReference>
<dbReference type="InterPro" id="IPR016193">
    <property type="entry name" value="Cytidine_deaminase-like"/>
</dbReference>
<dbReference type="InterPro" id="IPR020797">
    <property type="entry name" value="Cytidine_deaminase_bacteria"/>
</dbReference>
<dbReference type="NCBIfam" id="NF006537">
    <property type="entry name" value="PRK09027.1"/>
    <property type="match status" value="1"/>
</dbReference>
<dbReference type="PANTHER" id="PTHR11644">
    <property type="entry name" value="CYTIDINE DEAMINASE"/>
    <property type="match status" value="1"/>
</dbReference>
<dbReference type="PANTHER" id="PTHR11644:SF2">
    <property type="entry name" value="CYTIDINE DEAMINASE"/>
    <property type="match status" value="1"/>
</dbReference>
<dbReference type="Pfam" id="PF00383">
    <property type="entry name" value="dCMP_cyt_deam_1"/>
    <property type="match status" value="1"/>
</dbReference>
<dbReference type="Pfam" id="PF08211">
    <property type="entry name" value="dCMP_cyt_deam_2"/>
    <property type="match status" value="1"/>
</dbReference>
<dbReference type="PIRSF" id="PIRSF006334">
    <property type="entry name" value="Cdd_plus_pseudo"/>
    <property type="match status" value="1"/>
</dbReference>
<dbReference type="SUPFAM" id="SSF53927">
    <property type="entry name" value="Cytidine deaminase-like"/>
    <property type="match status" value="2"/>
</dbReference>
<dbReference type="PROSITE" id="PS00903">
    <property type="entry name" value="CYT_DCMP_DEAMINASES_1"/>
    <property type="match status" value="1"/>
</dbReference>
<dbReference type="PROSITE" id="PS51747">
    <property type="entry name" value="CYT_DCMP_DEAMINASES_2"/>
    <property type="match status" value="2"/>
</dbReference>
<feature type="chain" id="PRO_1000147116" description="Cytidine deaminase">
    <location>
        <begin position="1"/>
        <end position="296"/>
    </location>
</feature>
<feature type="domain" description="CMP/dCMP-type deaminase 1" evidence="2">
    <location>
        <begin position="47"/>
        <end position="167"/>
    </location>
</feature>
<feature type="domain" description="CMP/dCMP-type deaminase 2" evidence="2">
    <location>
        <begin position="186"/>
        <end position="296"/>
    </location>
</feature>
<feature type="active site" description="Proton donor" evidence="1">
    <location>
        <position position="103"/>
    </location>
</feature>
<feature type="binding site" evidence="1">
    <location>
        <begin position="88"/>
        <end position="90"/>
    </location>
    <ligand>
        <name>substrate</name>
    </ligand>
</feature>
<feature type="binding site" evidence="1">
    <location>
        <position position="101"/>
    </location>
    <ligand>
        <name>Zn(2+)</name>
        <dbReference type="ChEBI" id="CHEBI:29105"/>
        <note>catalytic</note>
    </ligand>
</feature>
<feature type="binding site" evidence="1">
    <location>
        <position position="128"/>
    </location>
    <ligand>
        <name>Zn(2+)</name>
        <dbReference type="ChEBI" id="CHEBI:29105"/>
        <note>catalytic</note>
    </ligand>
</feature>
<feature type="binding site" evidence="1">
    <location>
        <position position="131"/>
    </location>
    <ligand>
        <name>Zn(2+)</name>
        <dbReference type="ChEBI" id="CHEBI:29105"/>
        <note>catalytic</note>
    </ligand>
</feature>
<proteinExistence type="inferred from homology"/>
<sequence length="296" mass="32135">MQDRFIKCIAQLPKPLSDALIPLLNADFAGHIDAQQLGMLTTKSQLEESELLLALLPIAAALAKPPISEFYVGAIAKGKSGDIYMGANLELSGEALFHSVHAEQSAISHAWLSGETQILDVVVNFSPCGHCRQFMNEMVEGQKVVIHLPEQKAQPLAHYLPYAFGPSNLNITEPLLSKQQHELSLDSSDPMIIEALDHASLSYAPYSNSYAAVVLETKDGATYCGRYAENAAFNPSMLPMQMALSTMTRHNREFTEINRAVLIESAQGKISLVGATMDALHAVAAVELEHIVIDPA</sequence>
<evidence type="ECO:0000255" key="1">
    <source>
        <dbReference type="HAMAP-Rule" id="MF_01558"/>
    </source>
</evidence>
<evidence type="ECO:0000255" key="2">
    <source>
        <dbReference type="PROSITE-ProRule" id="PRU01083"/>
    </source>
</evidence>
<name>CDD_SHEWM</name>
<keyword id="KW-0378">Hydrolase</keyword>
<keyword id="KW-0479">Metal-binding</keyword>
<keyword id="KW-1185">Reference proteome</keyword>
<keyword id="KW-0862">Zinc</keyword>